<sequence length="539" mass="60009">MHDKILILDFGSQVTQLIARRVREAHVYCEIHPNDVSDAFVREFAPKAIILSGSHASTYEDHQLRAPQAVWDLGVPVLGICYGMQTMAVQLGGKVEWSDHREFGYAEMRAHGHTELLKDIEDFRTPEGHGMLKVWMSHGDKVTGLPPGFKLMASTPSCPIAGMADETRHYYAVQFHPEVTHTVKGRQMLERFVLQIAGCKPDWVMRDHIEEAVAKIREQVGDEEVILGLSGGVDSSVAAALIHRAIGDQLTCVFVDHGLLRQDEGKLVMEMFVGRLHAKVVHVDASEQFLGHLAGVTDPEQKRKIIGREFVEVFQAEARKLTNAKWLAQGTIYPDVVESGGTKTKKATTIKSHHNVGGLPETLGLKLLEPLRDLFKDEVRELGVELGLPPEMVYRHPFPGPGLGVRILGEVKRDYADLLRRADAIFIEELRKTIATEHDAAAGLCEPEQVGKSWYDLTSQAFAVFLPVKSVGVMGDGRTYDYVVALRAVQTTDFMTAHWAHLPYALLGRCSNRIINEVRGLNRVVYDVSGKPPATIEWE</sequence>
<keyword id="KW-0067">ATP-binding</keyword>
<keyword id="KW-0315">Glutamine amidotransferase</keyword>
<keyword id="KW-0332">GMP biosynthesis</keyword>
<keyword id="KW-0436">Ligase</keyword>
<keyword id="KW-0547">Nucleotide-binding</keyword>
<keyword id="KW-0658">Purine biosynthesis</keyword>
<proteinExistence type="inferred from homology"/>
<protein>
    <recommendedName>
        <fullName evidence="1">GMP synthase [glutamine-hydrolyzing]</fullName>
        <ecNumber evidence="1">6.3.5.2</ecNumber>
    </recommendedName>
    <alternativeName>
        <fullName evidence="1">GMP synthetase</fullName>
    </alternativeName>
    <alternativeName>
        <fullName evidence="1">Glutamine amidotransferase</fullName>
    </alternativeName>
</protein>
<feature type="chain" id="PRO_1000120270" description="GMP synthase [glutamine-hydrolyzing]">
    <location>
        <begin position="1"/>
        <end position="539"/>
    </location>
</feature>
<feature type="domain" description="Glutamine amidotransferase type-1" evidence="1">
    <location>
        <begin position="4"/>
        <end position="202"/>
    </location>
</feature>
<feature type="domain" description="GMPS ATP-PPase" evidence="1">
    <location>
        <begin position="203"/>
        <end position="395"/>
    </location>
</feature>
<feature type="active site" description="Nucleophile" evidence="1">
    <location>
        <position position="81"/>
    </location>
</feature>
<feature type="active site" evidence="1">
    <location>
        <position position="176"/>
    </location>
</feature>
<feature type="active site" evidence="1">
    <location>
        <position position="178"/>
    </location>
</feature>
<feature type="binding site" evidence="1">
    <location>
        <begin position="230"/>
        <end position="236"/>
    </location>
    <ligand>
        <name>ATP</name>
        <dbReference type="ChEBI" id="CHEBI:30616"/>
    </ligand>
</feature>
<evidence type="ECO:0000255" key="1">
    <source>
        <dbReference type="HAMAP-Rule" id="MF_00344"/>
    </source>
</evidence>
<comment type="function">
    <text evidence="1">Catalyzes the synthesis of GMP from XMP.</text>
</comment>
<comment type="catalytic activity">
    <reaction evidence="1">
        <text>XMP + L-glutamine + ATP + H2O = GMP + L-glutamate + AMP + diphosphate + 2 H(+)</text>
        <dbReference type="Rhea" id="RHEA:11680"/>
        <dbReference type="ChEBI" id="CHEBI:15377"/>
        <dbReference type="ChEBI" id="CHEBI:15378"/>
        <dbReference type="ChEBI" id="CHEBI:29985"/>
        <dbReference type="ChEBI" id="CHEBI:30616"/>
        <dbReference type="ChEBI" id="CHEBI:33019"/>
        <dbReference type="ChEBI" id="CHEBI:57464"/>
        <dbReference type="ChEBI" id="CHEBI:58115"/>
        <dbReference type="ChEBI" id="CHEBI:58359"/>
        <dbReference type="ChEBI" id="CHEBI:456215"/>
        <dbReference type="EC" id="6.3.5.2"/>
    </reaction>
</comment>
<comment type="pathway">
    <text evidence="1">Purine metabolism; GMP biosynthesis; GMP from XMP (L-Gln route): step 1/1.</text>
</comment>
<comment type="subunit">
    <text evidence="1">Homodimer.</text>
</comment>
<name>GUAA_CUPTR</name>
<gene>
    <name evidence="1" type="primary">guaA</name>
    <name type="ordered locus">RALTA_A1664</name>
</gene>
<organism>
    <name type="scientific">Cupriavidus taiwanensis (strain DSM 17343 / BCRC 17206 / CCUG 44338 / CIP 107171 / LMG 19424 / R1)</name>
    <name type="common">Ralstonia taiwanensis (strain LMG 19424)</name>
    <dbReference type="NCBI Taxonomy" id="977880"/>
    <lineage>
        <taxon>Bacteria</taxon>
        <taxon>Pseudomonadati</taxon>
        <taxon>Pseudomonadota</taxon>
        <taxon>Betaproteobacteria</taxon>
        <taxon>Burkholderiales</taxon>
        <taxon>Burkholderiaceae</taxon>
        <taxon>Cupriavidus</taxon>
    </lineage>
</organism>
<accession>B3R290</accession>
<reference key="1">
    <citation type="journal article" date="2008" name="Genome Res.">
        <title>Genome sequence of the beta-rhizobium Cupriavidus taiwanensis and comparative genomics of rhizobia.</title>
        <authorList>
            <person name="Amadou C."/>
            <person name="Pascal G."/>
            <person name="Mangenot S."/>
            <person name="Glew M."/>
            <person name="Bontemps C."/>
            <person name="Capela D."/>
            <person name="Carrere S."/>
            <person name="Cruveiller S."/>
            <person name="Dossat C."/>
            <person name="Lajus A."/>
            <person name="Marchetti M."/>
            <person name="Poinsot V."/>
            <person name="Rouy Z."/>
            <person name="Servin B."/>
            <person name="Saad M."/>
            <person name="Schenowitz C."/>
            <person name="Barbe V."/>
            <person name="Batut J."/>
            <person name="Medigue C."/>
            <person name="Masson-Boivin C."/>
        </authorList>
    </citation>
    <scope>NUCLEOTIDE SEQUENCE [LARGE SCALE GENOMIC DNA]</scope>
    <source>
        <strain>DSM 17343 / BCRC 17206 / CCUG 44338 / CIP 107171 / LMG 19424 / R1</strain>
    </source>
</reference>
<dbReference type="EC" id="6.3.5.2" evidence="1"/>
<dbReference type="EMBL" id="CU633749">
    <property type="protein sequence ID" value="CAQ69607.1"/>
    <property type="molecule type" value="Genomic_DNA"/>
</dbReference>
<dbReference type="RefSeq" id="WP_012352928.1">
    <property type="nucleotide sequence ID" value="NC_010528.1"/>
</dbReference>
<dbReference type="SMR" id="B3R290"/>
<dbReference type="GeneID" id="29761781"/>
<dbReference type="KEGG" id="cti:RALTA_A1664"/>
<dbReference type="eggNOG" id="COG0518">
    <property type="taxonomic scope" value="Bacteria"/>
</dbReference>
<dbReference type="eggNOG" id="COG0519">
    <property type="taxonomic scope" value="Bacteria"/>
</dbReference>
<dbReference type="HOGENOM" id="CLU_014340_0_5_4"/>
<dbReference type="BioCyc" id="CTAI977880:RALTA_RS07995-MONOMER"/>
<dbReference type="UniPathway" id="UPA00189">
    <property type="reaction ID" value="UER00296"/>
</dbReference>
<dbReference type="Proteomes" id="UP000001692">
    <property type="component" value="Chromosome 1"/>
</dbReference>
<dbReference type="GO" id="GO:0005829">
    <property type="term" value="C:cytosol"/>
    <property type="evidence" value="ECO:0007669"/>
    <property type="project" value="TreeGrafter"/>
</dbReference>
<dbReference type="GO" id="GO:0005524">
    <property type="term" value="F:ATP binding"/>
    <property type="evidence" value="ECO:0007669"/>
    <property type="project" value="UniProtKB-UniRule"/>
</dbReference>
<dbReference type="GO" id="GO:0003921">
    <property type="term" value="F:GMP synthase activity"/>
    <property type="evidence" value="ECO:0007669"/>
    <property type="project" value="InterPro"/>
</dbReference>
<dbReference type="CDD" id="cd01742">
    <property type="entry name" value="GATase1_GMP_Synthase"/>
    <property type="match status" value="1"/>
</dbReference>
<dbReference type="CDD" id="cd01997">
    <property type="entry name" value="GMP_synthase_C"/>
    <property type="match status" value="1"/>
</dbReference>
<dbReference type="FunFam" id="3.30.300.10:FF:000002">
    <property type="entry name" value="GMP synthase [glutamine-hydrolyzing]"/>
    <property type="match status" value="1"/>
</dbReference>
<dbReference type="FunFam" id="3.40.50.620:FF:000001">
    <property type="entry name" value="GMP synthase [glutamine-hydrolyzing]"/>
    <property type="match status" value="1"/>
</dbReference>
<dbReference type="FunFam" id="3.40.50.880:FF:000001">
    <property type="entry name" value="GMP synthase [glutamine-hydrolyzing]"/>
    <property type="match status" value="1"/>
</dbReference>
<dbReference type="Gene3D" id="3.30.300.10">
    <property type="match status" value="1"/>
</dbReference>
<dbReference type="Gene3D" id="3.40.50.880">
    <property type="match status" value="1"/>
</dbReference>
<dbReference type="Gene3D" id="3.40.50.620">
    <property type="entry name" value="HUPs"/>
    <property type="match status" value="1"/>
</dbReference>
<dbReference type="HAMAP" id="MF_00344">
    <property type="entry name" value="GMP_synthase"/>
    <property type="match status" value="1"/>
</dbReference>
<dbReference type="InterPro" id="IPR029062">
    <property type="entry name" value="Class_I_gatase-like"/>
</dbReference>
<dbReference type="InterPro" id="IPR017926">
    <property type="entry name" value="GATASE"/>
</dbReference>
<dbReference type="InterPro" id="IPR001674">
    <property type="entry name" value="GMP_synth_C"/>
</dbReference>
<dbReference type="InterPro" id="IPR004739">
    <property type="entry name" value="GMP_synth_GATase"/>
</dbReference>
<dbReference type="InterPro" id="IPR022955">
    <property type="entry name" value="GMP_synthase"/>
</dbReference>
<dbReference type="InterPro" id="IPR025777">
    <property type="entry name" value="GMPS_ATP_PPase_dom"/>
</dbReference>
<dbReference type="InterPro" id="IPR022310">
    <property type="entry name" value="NAD/GMP_synthase"/>
</dbReference>
<dbReference type="InterPro" id="IPR014729">
    <property type="entry name" value="Rossmann-like_a/b/a_fold"/>
</dbReference>
<dbReference type="NCBIfam" id="TIGR00884">
    <property type="entry name" value="guaA_Cterm"/>
    <property type="match status" value="1"/>
</dbReference>
<dbReference type="NCBIfam" id="TIGR00888">
    <property type="entry name" value="guaA_Nterm"/>
    <property type="match status" value="1"/>
</dbReference>
<dbReference type="NCBIfam" id="NF000848">
    <property type="entry name" value="PRK00074.1"/>
    <property type="match status" value="1"/>
</dbReference>
<dbReference type="PANTHER" id="PTHR11922:SF2">
    <property type="entry name" value="GMP SYNTHASE [GLUTAMINE-HYDROLYZING]"/>
    <property type="match status" value="1"/>
</dbReference>
<dbReference type="PANTHER" id="PTHR11922">
    <property type="entry name" value="GMP SYNTHASE-RELATED"/>
    <property type="match status" value="1"/>
</dbReference>
<dbReference type="Pfam" id="PF00117">
    <property type="entry name" value="GATase"/>
    <property type="match status" value="1"/>
</dbReference>
<dbReference type="Pfam" id="PF00958">
    <property type="entry name" value="GMP_synt_C"/>
    <property type="match status" value="1"/>
</dbReference>
<dbReference type="Pfam" id="PF02540">
    <property type="entry name" value="NAD_synthase"/>
    <property type="match status" value="1"/>
</dbReference>
<dbReference type="SUPFAM" id="SSF52402">
    <property type="entry name" value="Adenine nucleotide alpha hydrolases-like"/>
    <property type="match status" value="1"/>
</dbReference>
<dbReference type="SUPFAM" id="SSF52317">
    <property type="entry name" value="Class I glutamine amidotransferase-like"/>
    <property type="match status" value="1"/>
</dbReference>
<dbReference type="SUPFAM" id="SSF54810">
    <property type="entry name" value="GMP synthetase C-terminal dimerisation domain"/>
    <property type="match status" value="1"/>
</dbReference>
<dbReference type="PROSITE" id="PS51273">
    <property type="entry name" value="GATASE_TYPE_1"/>
    <property type="match status" value="1"/>
</dbReference>
<dbReference type="PROSITE" id="PS51553">
    <property type="entry name" value="GMPS_ATP_PPASE"/>
    <property type="match status" value="1"/>
</dbReference>